<gene>
    <name evidence="1" type="primary">sfsA</name>
    <name type="ordered locus">PTO1123</name>
</gene>
<feature type="chain" id="PRO_0000152324" description="Sugar fermentation stimulation protein homolog">
    <location>
        <begin position="1"/>
        <end position="226"/>
    </location>
</feature>
<sequence length="226" mass="26479">MSPFIKRGHGFMVLSFENLIDAVIVSRINRFVVKCMVNNEEVYAHLHDPGRLNEIIYPGNKIKLRKTDGKKYNYSVTFGHDGFNYTLNDARFHSMIASQFLRLGFKKEYKYMDSRIDFLLDEYLIEVKSCTLVNSKKAMFPDAVTRRGTHHLNVLLNSIQDGYRPYIMFLIFNERAECFTPNKCRDPEFSGTFYRAVKNGVSSKFLVFYIRENSIYFDKEISMCVD</sequence>
<proteinExistence type="inferred from homology"/>
<name>SFSA_PICTO</name>
<dbReference type="EMBL" id="AE017261">
    <property type="protein sequence ID" value="AAT43708.1"/>
    <property type="molecule type" value="Genomic_DNA"/>
</dbReference>
<dbReference type="RefSeq" id="WP_011177924.1">
    <property type="nucleotide sequence ID" value="NC_005877.1"/>
</dbReference>
<dbReference type="SMR" id="Q6KZZ4"/>
<dbReference type="STRING" id="263820.PTO1123"/>
<dbReference type="PaxDb" id="263820-PTO1123"/>
<dbReference type="GeneID" id="2845187"/>
<dbReference type="KEGG" id="pto:PTO1123"/>
<dbReference type="eggNOG" id="arCOG04115">
    <property type="taxonomic scope" value="Archaea"/>
</dbReference>
<dbReference type="HOGENOM" id="CLU_052299_1_0_2"/>
<dbReference type="InParanoid" id="Q6KZZ4"/>
<dbReference type="OrthoDB" id="34139at2157"/>
<dbReference type="Proteomes" id="UP000000438">
    <property type="component" value="Chromosome"/>
</dbReference>
<dbReference type="GO" id="GO:0003677">
    <property type="term" value="F:DNA binding"/>
    <property type="evidence" value="ECO:0007669"/>
    <property type="project" value="InterPro"/>
</dbReference>
<dbReference type="CDD" id="cd22357">
    <property type="entry name" value="SfsA-like"/>
    <property type="match status" value="1"/>
</dbReference>
<dbReference type="Gene3D" id="2.40.50.580">
    <property type="match status" value="1"/>
</dbReference>
<dbReference type="Gene3D" id="3.40.1350.60">
    <property type="match status" value="1"/>
</dbReference>
<dbReference type="HAMAP" id="MF_00095">
    <property type="entry name" value="SfsA"/>
    <property type="match status" value="1"/>
</dbReference>
<dbReference type="InterPro" id="IPR005224">
    <property type="entry name" value="SfsA"/>
</dbReference>
<dbReference type="InterPro" id="IPR040452">
    <property type="entry name" value="SfsA_C"/>
</dbReference>
<dbReference type="InterPro" id="IPR041465">
    <property type="entry name" value="SfsA_N"/>
</dbReference>
<dbReference type="NCBIfam" id="TIGR00230">
    <property type="entry name" value="sfsA"/>
    <property type="match status" value="1"/>
</dbReference>
<dbReference type="PANTHER" id="PTHR30545">
    <property type="entry name" value="SUGAR FERMENTATION STIMULATION PROTEIN A"/>
    <property type="match status" value="1"/>
</dbReference>
<dbReference type="PANTHER" id="PTHR30545:SF2">
    <property type="entry name" value="SUGAR FERMENTATION STIMULATION PROTEIN A"/>
    <property type="match status" value="1"/>
</dbReference>
<dbReference type="Pfam" id="PF03749">
    <property type="entry name" value="SfsA"/>
    <property type="match status" value="1"/>
</dbReference>
<dbReference type="Pfam" id="PF17746">
    <property type="entry name" value="SfsA_N"/>
    <property type="match status" value="1"/>
</dbReference>
<organism>
    <name type="scientific">Picrophilus torridus (strain ATCC 700027 / DSM 9790 / JCM 10055 / NBRC 100828 / KAW 2/3)</name>
    <dbReference type="NCBI Taxonomy" id="1122961"/>
    <lineage>
        <taxon>Archaea</taxon>
        <taxon>Methanobacteriati</taxon>
        <taxon>Thermoplasmatota</taxon>
        <taxon>Thermoplasmata</taxon>
        <taxon>Thermoplasmatales</taxon>
        <taxon>Picrophilaceae</taxon>
        <taxon>Picrophilus</taxon>
    </lineage>
</organism>
<reference key="1">
    <citation type="journal article" date="2004" name="Proc. Natl. Acad. Sci. U.S.A.">
        <title>Genome sequence of Picrophilus torridus and its implications for life around pH 0.</title>
        <authorList>
            <person name="Fuetterer O."/>
            <person name="Angelov A."/>
            <person name="Liesegang H."/>
            <person name="Gottschalk G."/>
            <person name="Schleper C."/>
            <person name="Schepers B."/>
            <person name="Dock C."/>
            <person name="Antranikian G."/>
            <person name="Liebl W."/>
        </authorList>
    </citation>
    <scope>NUCLEOTIDE SEQUENCE [LARGE SCALE GENOMIC DNA]</scope>
    <source>
        <strain>ATCC 700027 / DSM 9790 / JCM 10055 / NBRC 100828 / KAW 2/3</strain>
    </source>
</reference>
<protein>
    <recommendedName>
        <fullName evidence="1">Sugar fermentation stimulation protein homolog</fullName>
    </recommendedName>
</protein>
<comment type="similarity">
    <text evidence="1">Belongs to the SfsA family.</text>
</comment>
<accession>Q6KZZ4</accession>
<evidence type="ECO:0000255" key="1">
    <source>
        <dbReference type="HAMAP-Rule" id="MF_00095"/>
    </source>
</evidence>